<proteinExistence type="inferred from homology"/>
<organism>
    <name type="scientific">Bacillus cereus (strain ATCC 14579 / DSM 31 / CCUG 7414 / JCM 2152 / NBRC 15305 / NCIMB 9373 / NCTC 2599 / NRRL B-3711)</name>
    <dbReference type="NCBI Taxonomy" id="226900"/>
    <lineage>
        <taxon>Bacteria</taxon>
        <taxon>Bacillati</taxon>
        <taxon>Bacillota</taxon>
        <taxon>Bacilli</taxon>
        <taxon>Bacillales</taxon>
        <taxon>Bacillaceae</taxon>
        <taxon>Bacillus</taxon>
        <taxon>Bacillus cereus group</taxon>
    </lineage>
</organism>
<gene>
    <name evidence="1" type="primary">deoC</name>
    <name type="ordered locus">BC_1820</name>
</gene>
<protein>
    <recommendedName>
        <fullName evidence="1">Deoxyribose-phosphate aldolase</fullName>
        <shortName evidence="1">DERA</shortName>
        <ecNumber evidence="1">4.1.2.4</ecNumber>
    </recommendedName>
    <alternativeName>
        <fullName evidence="1">2-deoxy-D-ribose 5-phosphate aldolase</fullName>
    </alternativeName>
    <alternativeName>
        <fullName evidence="1">Phosphodeoxyriboaldolase</fullName>
        <shortName evidence="1">Deoxyriboaldolase</shortName>
    </alternativeName>
</protein>
<feature type="chain" id="PRO_0000057222" description="Deoxyribose-phosphate aldolase">
    <location>
        <begin position="1"/>
        <end position="223"/>
    </location>
</feature>
<feature type="active site" description="Proton donor/acceptor" evidence="1">
    <location>
        <position position="89"/>
    </location>
</feature>
<feature type="active site" description="Schiff-base intermediate with acetaldehyde" evidence="1">
    <location>
        <position position="152"/>
    </location>
</feature>
<feature type="active site" description="Proton donor/acceptor" evidence="1">
    <location>
        <position position="181"/>
    </location>
</feature>
<comment type="function">
    <text evidence="1">Catalyzes a reversible aldol reaction between acetaldehyde and D-glyceraldehyde 3-phosphate to generate 2-deoxy-D-ribose 5-phosphate.</text>
</comment>
<comment type="catalytic activity">
    <reaction evidence="1">
        <text>2-deoxy-D-ribose 5-phosphate = D-glyceraldehyde 3-phosphate + acetaldehyde</text>
        <dbReference type="Rhea" id="RHEA:12821"/>
        <dbReference type="ChEBI" id="CHEBI:15343"/>
        <dbReference type="ChEBI" id="CHEBI:59776"/>
        <dbReference type="ChEBI" id="CHEBI:62877"/>
        <dbReference type="EC" id="4.1.2.4"/>
    </reaction>
</comment>
<comment type="pathway">
    <text evidence="1">Carbohydrate degradation; 2-deoxy-D-ribose 1-phosphate degradation; D-glyceraldehyde 3-phosphate and acetaldehyde from 2-deoxy-alpha-D-ribose 1-phosphate: step 2/2.</text>
</comment>
<comment type="subcellular location">
    <subcellularLocation>
        <location evidence="1">Cytoplasm</location>
    </subcellularLocation>
</comment>
<comment type="similarity">
    <text evidence="1">Belongs to the DeoC/FbaB aldolase family. DeoC type 1 subfamily.</text>
</comment>
<accession>Q81EY8</accession>
<dbReference type="EC" id="4.1.2.4" evidence="1"/>
<dbReference type="EMBL" id="AE016877">
    <property type="protein sequence ID" value="AAP08794.1"/>
    <property type="molecule type" value="Genomic_DNA"/>
</dbReference>
<dbReference type="RefSeq" id="NP_831593.1">
    <property type="nucleotide sequence ID" value="NC_004722.1"/>
</dbReference>
<dbReference type="RefSeq" id="WP_001017437.1">
    <property type="nucleotide sequence ID" value="NC_004722.1"/>
</dbReference>
<dbReference type="SMR" id="Q81EY8"/>
<dbReference type="STRING" id="226900.BC_1820"/>
<dbReference type="KEGG" id="bce:BC1820"/>
<dbReference type="PATRIC" id="fig|226900.8.peg.1811"/>
<dbReference type="HOGENOM" id="CLU_053595_0_1_9"/>
<dbReference type="UniPathway" id="UPA00002">
    <property type="reaction ID" value="UER00468"/>
</dbReference>
<dbReference type="Proteomes" id="UP000001417">
    <property type="component" value="Chromosome"/>
</dbReference>
<dbReference type="GO" id="GO:0005737">
    <property type="term" value="C:cytoplasm"/>
    <property type="evidence" value="ECO:0007669"/>
    <property type="project" value="UniProtKB-SubCell"/>
</dbReference>
<dbReference type="GO" id="GO:0004139">
    <property type="term" value="F:deoxyribose-phosphate aldolase activity"/>
    <property type="evidence" value="ECO:0000318"/>
    <property type="project" value="GO_Central"/>
</dbReference>
<dbReference type="GO" id="GO:0006018">
    <property type="term" value="P:2-deoxyribose 1-phosphate catabolic process"/>
    <property type="evidence" value="ECO:0007669"/>
    <property type="project" value="UniProtKB-UniRule"/>
</dbReference>
<dbReference type="GO" id="GO:0016052">
    <property type="term" value="P:carbohydrate catabolic process"/>
    <property type="evidence" value="ECO:0000318"/>
    <property type="project" value="GO_Central"/>
</dbReference>
<dbReference type="GO" id="GO:0009264">
    <property type="term" value="P:deoxyribonucleotide catabolic process"/>
    <property type="evidence" value="ECO:0000318"/>
    <property type="project" value="GO_Central"/>
</dbReference>
<dbReference type="CDD" id="cd00959">
    <property type="entry name" value="DeoC"/>
    <property type="match status" value="1"/>
</dbReference>
<dbReference type="FunFam" id="3.20.20.70:FF:000044">
    <property type="entry name" value="Deoxyribose-phosphate aldolase"/>
    <property type="match status" value="1"/>
</dbReference>
<dbReference type="Gene3D" id="3.20.20.70">
    <property type="entry name" value="Aldolase class I"/>
    <property type="match status" value="1"/>
</dbReference>
<dbReference type="HAMAP" id="MF_00114">
    <property type="entry name" value="DeoC_type1"/>
    <property type="match status" value="1"/>
</dbReference>
<dbReference type="InterPro" id="IPR013785">
    <property type="entry name" value="Aldolase_TIM"/>
</dbReference>
<dbReference type="InterPro" id="IPR011343">
    <property type="entry name" value="DeoC"/>
</dbReference>
<dbReference type="InterPro" id="IPR002915">
    <property type="entry name" value="DeoC/FbaB/LacD_aldolase"/>
</dbReference>
<dbReference type="InterPro" id="IPR028581">
    <property type="entry name" value="DeoC_typeI"/>
</dbReference>
<dbReference type="NCBIfam" id="TIGR00126">
    <property type="entry name" value="deoC"/>
    <property type="match status" value="1"/>
</dbReference>
<dbReference type="PANTHER" id="PTHR10889">
    <property type="entry name" value="DEOXYRIBOSE-PHOSPHATE ALDOLASE"/>
    <property type="match status" value="1"/>
</dbReference>
<dbReference type="PANTHER" id="PTHR10889:SF1">
    <property type="entry name" value="DEOXYRIBOSE-PHOSPHATE ALDOLASE"/>
    <property type="match status" value="1"/>
</dbReference>
<dbReference type="Pfam" id="PF01791">
    <property type="entry name" value="DeoC"/>
    <property type="match status" value="1"/>
</dbReference>
<dbReference type="PIRSF" id="PIRSF001357">
    <property type="entry name" value="DeoC"/>
    <property type="match status" value="1"/>
</dbReference>
<dbReference type="SMART" id="SM01133">
    <property type="entry name" value="DeoC"/>
    <property type="match status" value="1"/>
</dbReference>
<dbReference type="SUPFAM" id="SSF51569">
    <property type="entry name" value="Aldolase"/>
    <property type="match status" value="1"/>
</dbReference>
<evidence type="ECO:0000255" key="1">
    <source>
        <dbReference type="HAMAP-Rule" id="MF_00114"/>
    </source>
</evidence>
<keyword id="KW-0963">Cytoplasm</keyword>
<keyword id="KW-0456">Lyase</keyword>
<keyword id="KW-1185">Reference proteome</keyword>
<keyword id="KW-0704">Schiff base</keyword>
<sequence length="223" mass="23379">MNIAKLIDHTILKANTTKEDVMKVIEEAKEYKFASVCINPPWVKLAADELAGHDVDVCTVIGFPLGASTTETKAFETKDAIAKGATEVDMVINVGALKDGDNELVEKDIYEVVQAAKGKALVKVIIETCLLTDEEKVRACELSVKAGADFVKTSTGFSTGGATAEDIALMRKTVGPNVGVKASGGVRTREDADKMVAAGASRVGASASVAIVLNDAKGATDNY</sequence>
<name>DEOC_BACCR</name>
<reference key="1">
    <citation type="journal article" date="2003" name="Nature">
        <title>Genome sequence of Bacillus cereus and comparative analysis with Bacillus anthracis.</title>
        <authorList>
            <person name="Ivanova N."/>
            <person name="Sorokin A."/>
            <person name="Anderson I."/>
            <person name="Galleron N."/>
            <person name="Candelon B."/>
            <person name="Kapatral V."/>
            <person name="Bhattacharyya A."/>
            <person name="Reznik G."/>
            <person name="Mikhailova N."/>
            <person name="Lapidus A."/>
            <person name="Chu L."/>
            <person name="Mazur M."/>
            <person name="Goltsman E."/>
            <person name="Larsen N."/>
            <person name="D'Souza M."/>
            <person name="Walunas T."/>
            <person name="Grechkin Y."/>
            <person name="Pusch G."/>
            <person name="Haselkorn R."/>
            <person name="Fonstein M."/>
            <person name="Ehrlich S.D."/>
            <person name="Overbeek R."/>
            <person name="Kyrpides N.C."/>
        </authorList>
    </citation>
    <scope>NUCLEOTIDE SEQUENCE [LARGE SCALE GENOMIC DNA]</scope>
    <source>
        <strain>ATCC 14579 / DSM 31 / CCUG 7414 / JCM 2152 / NBRC 15305 / NCIMB 9373 / NCTC 2599 / NRRL B-3711</strain>
    </source>
</reference>